<evidence type="ECO:0000305" key="1"/>
<gene>
    <name type="primary">ycf21</name>
</gene>
<proteinExistence type="inferred from homology"/>
<reference key="1">
    <citation type="journal article" date="1995" name="Plant Mol. Biol. Rep.">
        <title>Nucleotide sequence of the cyanelle DNA from Cyanophora paradoxa.</title>
        <authorList>
            <person name="Stirewalt V.L."/>
            <person name="Michalowski C.B."/>
            <person name="Loeffelhardt W."/>
            <person name="Bohnert H.J."/>
            <person name="Bryant D.A."/>
        </authorList>
    </citation>
    <scope>NUCLEOTIDE SEQUENCE [LARGE SCALE GENOMIC DNA]</scope>
    <source>
        <strain>UTEX LB 555 / Pringsheim</strain>
    </source>
</reference>
<reference key="2">
    <citation type="book" date="1997" name="Eukaryotism and symbiosis">
        <title>The complete sequence of the cyanelle genome of Cyanophora paradoxa: the genetic complexity of a primitive plastid.</title>
        <editorList>
            <person name="Schenk H.E.A."/>
            <person name="Herrmann R."/>
            <person name="Jeon K.W."/>
            <person name="Mueller N.E."/>
            <person name="Schwemmler W."/>
        </editorList>
        <authorList>
            <person name="Loeffelhardt W."/>
            <person name="Stirewalt V.L."/>
            <person name="Michalowski C.B."/>
            <person name="Annarella M."/>
            <person name="Farley J.Y."/>
            <person name="Schluchter W.M."/>
            <person name="Chung S."/>
            <person name="Newmann-Spallart C."/>
            <person name="Steiner J.M."/>
            <person name="Jakowitsch J."/>
            <person name="Bohnert H.J."/>
            <person name="Bryant D.A."/>
        </authorList>
    </citation>
    <scope>NUCLEOTIDE SEQUENCE [LARGE SCALE GENOMIC DNA]</scope>
    <source>
        <strain>UTEX LB 555 / Pringsheim</strain>
    </source>
</reference>
<keyword id="KW-0194">Cyanelle</keyword>
<keyword id="KW-0934">Plastid</keyword>
<geneLocation type="cyanelle"/>
<comment type="subcellular location">
    <subcellularLocation>
        <location>Plastid</location>
        <location>Cyanelle</location>
    </subcellularLocation>
</comment>
<comment type="similarity">
    <text evidence="1">Belongs to the ycf21 family.</text>
</comment>
<accession>P48358</accession>
<sequence length="193" mass="23269">MTNFQLISDNLKEEKIEFEILWIGQSELFYKGIESTLIDKYWQFLLLNDGSLTKQLQLLKNKKIKRKLLEESPINFTTSFISYLTQPIKIPIIQRNIFLYSNEVEPLIYATSWWSENTINSFFLDKEQPIWSNLAQLKIEFYRDLRKILLINSKSLEKQFNKKGPFWSRYYLIWYNNFPITIIFEIFSPIIKV</sequence>
<organism>
    <name type="scientific">Cyanophora paradoxa</name>
    <dbReference type="NCBI Taxonomy" id="2762"/>
    <lineage>
        <taxon>Eukaryota</taxon>
        <taxon>Glaucocystophyceae</taxon>
        <taxon>Cyanophoraceae</taxon>
        <taxon>Cyanophora</taxon>
    </lineage>
</organism>
<feature type="chain" id="PRO_0000217332" description="Uncharacterized protein ycf21">
    <location>
        <begin position="1"/>
        <end position="193"/>
    </location>
</feature>
<dbReference type="EMBL" id="U30821">
    <property type="protein sequence ID" value="AAA81315.1"/>
    <property type="molecule type" value="Genomic_DNA"/>
</dbReference>
<dbReference type="PIR" id="T06972">
    <property type="entry name" value="T06972"/>
</dbReference>
<dbReference type="RefSeq" id="NP_043284.1">
    <property type="nucleotide sequence ID" value="NC_001675.1"/>
</dbReference>
<dbReference type="SMR" id="P48358"/>
<dbReference type="GeneID" id="801676"/>
<dbReference type="GO" id="GO:0009842">
    <property type="term" value="C:cyanelle"/>
    <property type="evidence" value="ECO:0007669"/>
    <property type="project" value="UniProtKB-SubCell"/>
</dbReference>
<dbReference type="Gene3D" id="3.40.1410.10">
    <property type="entry name" value="Chorismate lyase-like"/>
    <property type="match status" value="1"/>
</dbReference>
<dbReference type="InterPro" id="IPR028978">
    <property type="entry name" value="Chorismate_lyase_/UTRA_dom_sf"/>
</dbReference>
<dbReference type="InterPro" id="IPR002800">
    <property type="entry name" value="Rv2949c-like"/>
</dbReference>
<dbReference type="Pfam" id="PF01947">
    <property type="entry name" value="Rv2949c-like"/>
    <property type="match status" value="1"/>
</dbReference>
<dbReference type="SUPFAM" id="SSF64288">
    <property type="entry name" value="Chorismate lyase-like"/>
    <property type="match status" value="1"/>
</dbReference>
<name>YCF21_CYAPA</name>
<protein>
    <recommendedName>
        <fullName>Uncharacterized protein ycf21</fullName>
    </recommendedName>
</protein>